<dbReference type="EC" id="2.7.8.26" evidence="1"/>
<dbReference type="EMBL" id="CP000503">
    <property type="protein sequence ID" value="ABM23837.1"/>
    <property type="molecule type" value="Genomic_DNA"/>
</dbReference>
<dbReference type="RefSeq" id="WP_011788363.1">
    <property type="nucleotide sequence ID" value="NC_008750.1"/>
</dbReference>
<dbReference type="KEGG" id="shw:Sputw3181_0987"/>
<dbReference type="HOGENOM" id="CLU_057426_1_1_6"/>
<dbReference type="UniPathway" id="UPA00148">
    <property type="reaction ID" value="UER00238"/>
</dbReference>
<dbReference type="Proteomes" id="UP000002597">
    <property type="component" value="Chromosome"/>
</dbReference>
<dbReference type="GO" id="GO:0005886">
    <property type="term" value="C:plasma membrane"/>
    <property type="evidence" value="ECO:0007669"/>
    <property type="project" value="UniProtKB-SubCell"/>
</dbReference>
<dbReference type="GO" id="GO:0051073">
    <property type="term" value="F:adenosylcobinamide-GDP ribazoletransferase activity"/>
    <property type="evidence" value="ECO:0007669"/>
    <property type="project" value="UniProtKB-UniRule"/>
</dbReference>
<dbReference type="GO" id="GO:0008818">
    <property type="term" value="F:cobalamin 5'-phosphate synthase activity"/>
    <property type="evidence" value="ECO:0007669"/>
    <property type="project" value="UniProtKB-UniRule"/>
</dbReference>
<dbReference type="GO" id="GO:0009236">
    <property type="term" value="P:cobalamin biosynthetic process"/>
    <property type="evidence" value="ECO:0007669"/>
    <property type="project" value="UniProtKB-UniRule"/>
</dbReference>
<dbReference type="HAMAP" id="MF_00719">
    <property type="entry name" value="CobS"/>
    <property type="match status" value="1"/>
</dbReference>
<dbReference type="InterPro" id="IPR003805">
    <property type="entry name" value="CobS"/>
</dbReference>
<dbReference type="NCBIfam" id="TIGR00317">
    <property type="entry name" value="cobS"/>
    <property type="match status" value="1"/>
</dbReference>
<dbReference type="NCBIfam" id="NF001277">
    <property type="entry name" value="PRK00235.1-3"/>
    <property type="match status" value="1"/>
</dbReference>
<dbReference type="PANTHER" id="PTHR34148">
    <property type="entry name" value="ADENOSYLCOBINAMIDE-GDP RIBAZOLETRANSFERASE"/>
    <property type="match status" value="1"/>
</dbReference>
<dbReference type="PANTHER" id="PTHR34148:SF1">
    <property type="entry name" value="ADENOSYLCOBINAMIDE-GDP RIBAZOLETRANSFERASE"/>
    <property type="match status" value="1"/>
</dbReference>
<dbReference type="Pfam" id="PF02654">
    <property type="entry name" value="CobS"/>
    <property type="match status" value="1"/>
</dbReference>
<accession>A1RGP2</accession>
<keyword id="KW-0997">Cell inner membrane</keyword>
<keyword id="KW-1003">Cell membrane</keyword>
<keyword id="KW-0169">Cobalamin biosynthesis</keyword>
<keyword id="KW-0460">Magnesium</keyword>
<keyword id="KW-0472">Membrane</keyword>
<keyword id="KW-0808">Transferase</keyword>
<keyword id="KW-0812">Transmembrane</keyword>
<keyword id="KW-1133">Transmembrane helix</keyword>
<organism>
    <name type="scientific">Shewanella sp. (strain W3-18-1)</name>
    <dbReference type="NCBI Taxonomy" id="351745"/>
    <lineage>
        <taxon>Bacteria</taxon>
        <taxon>Pseudomonadati</taxon>
        <taxon>Pseudomonadota</taxon>
        <taxon>Gammaproteobacteria</taxon>
        <taxon>Alteromonadales</taxon>
        <taxon>Shewanellaceae</taxon>
        <taxon>Shewanella</taxon>
    </lineage>
</organism>
<comment type="function">
    <text evidence="1">Joins adenosylcobinamide-GDP and alpha-ribazole to generate adenosylcobalamin (Ado-cobalamin). Also synthesizes adenosylcobalamin 5'-phosphate from adenosylcobinamide-GDP and alpha-ribazole 5'-phosphate.</text>
</comment>
<comment type="catalytic activity">
    <reaction evidence="1">
        <text>alpha-ribazole + adenosylcob(III)inamide-GDP = adenosylcob(III)alamin + GMP + H(+)</text>
        <dbReference type="Rhea" id="RHEA:16049"/>
        <dbReference type="ChEBI" id="CHEBI:10329"/>
        <dbReference type="ChEBI" id="CHEBI:15378"/>
        <dbReference type="ChEBI" id="CHEBI:18408"/>
        <dbReference type="ChEBI" id="CHEBI:58115"/>
        <dbReference type="ChEBI" id="CHEBI:60487"/>
        <dbReference type="EC" id="2.7.8.26"/>
    </reaction>
</comment>
<comment type="catalytic activity">
    <reaction evidence="1">
        <text>alpha-ribazole 5'-phosphate + adenosylcob(III)inamide-GDP = adenosylcob(III)alamin 5'-phosphate + GMP + H(+)</text>
        <dbReference type="Rhea" id="RHEA:23560"/>
        <dbReference type="ChEBI" id="CHEBI:15378"/>
        <dbReference type="ChEBI" id="CHEBI:57918"/>
        <dbReference type="ChEBI" id="CHEBI:58115"/>
        <dbReference type="ChEBI" id="CHEBI:60487"/>
        <dbReference type="ChEBI" id="CHEBI:60493"/>
        <dbReference type="EC" id="2.7.8.26"/>
    </reaction>
</comment>
<comment type="cofactor">
    <cofactor evidence="1">
        <name>Mg(2+)</name>
        <dbReference type="ChEBI" id="CHEBI:18420"/>
    </cofactor>
</comment>
<comment type="pathway">
    <text evidence="1">Cofactor biosynthesis; adenosylcobalamin biosynthesis; adenosylcobalamin from cob(II)yrinate a,c-diamide: step 7/7.</text>
</comment>
<comment type="subcellular location">
    <subcellularLocation>
        <location evidence="1">Cell inner membrane</location>
        <topology evidence="1">Multi-pass membrane protein</topology>
    </subcellularLocation>
</comment>
<comment type="similarity">
    <text evidence="1">Belongs to the CobS family.</text>
</comment>
<sequence>MSERESWHKEIDLFLVAMGYFTRIPMPKWVEVDSDKLNKASRYFGLVGLLIGLLSAIVFWLTQNWLPAGVSVLLAMLVGVLLTGGFHEDGLADTFDGFGGGWTAEDKLRIMKDSRLGSYGAIALILALLLKWQLLVELALYDPVVAGSALIVAHTVSRVVAASIIFTEKYVRDDETSKSKPLSQHQGINELFILVASGVLVLLFLKGLAALSLLLVMIGLRRLIVVIFRRQIGGYTGDTLGAAQQICEIVCYLVLLIVGSIL</sequence>
<name>COBS_SHESW</name>
<proteinExistence type="inferred from homology"/>
<gene>
    <name evidence="1" type="primary">cobS</name>
    <name type="ordered locus">Sputw3181_0987</name>
</gene>
<protein>
    <recommendedName>
        <fullName evidence="1">Adenosylcobinamide-GDP ribazoletransferase</fullName>
        <ecNumber evidence="1">2.7.8.26</ecNumber>
    </recommendedName>
    <alternativeName>
        <fullName evidence="1">Cobalamin synthase</fullName>
    </alternativeName>
    <alternativeName>
        <fullName evidence="1">Cobalamin-5'-phosphate synthase</fullName>
    </alternativeName>
</protein>
<feature type="chain" id="PRO_1000045810" description="Adenosylcobinamide-GDP ribazoletransferase">
    <location>
        <begin position="1"/>
        <end position="262"/>
    </location>
</feature>
<feature type="transmembrane region" description="Helical" evidence="1">
    <location>
        <begin position="43"/>
        <end position="63"/>
    </location>
</feature>
<feature type="transmembrane region" description="Helical" evidence="1">
    <location>
        <begin position="66"/>
        <end position="86"/>
    </location>
</feature>
<feature type="transmembrane region" description="Helical" evidence="1">
    <location>
        <begin position="120"/>
        <end position="140"/>
    </location>
</feature>
<feature type="transmembrane region" description="Helical" evidence="1">
    <location>
        <begin position="146"/>
        <end position="166"/>
    </location>
</feature>
<feature type="transmembrane region" description="Helical" evidence="1">
    <location>
        <begin position="191"/>
        <end position="211"/>
    </location>
</feature>
<feature type="transmembrane region" description="Helical" evidence="1">
    <location>
        <begin position="242"/>
        <end position="262"/>
    </location>
</feature>
<reference key="1">
    <citation type="submission" date="2006-12" db="EMBL/GenBank/DDBJ databases">
        <title>Complete sequence of Shewanella sp. W3-18-1.</title>
        <authorList>
            <consortium name="US DOE Joint Genome Institute"/>
            <person name="Copeland A."/>
            <person name="Lucas S."/>
            <person name="Lapidus A."/>
            <person name="Barry K."/>
            <person name="Detter J.C."/>
            <person name="Glavina del Rio T."/>
            <person name="Hammon N."/>
            <person name="Israni S."/>
            <person name="Dalin E."/>
            <person name="Tice H."/>
            <person name="Pitluck S."/>
            <person name="Chain P."/>
            <person name="Malfatti S."/>
            <person name="Shin M."/>
            <person name="Vergez L."/>
            <person name="Schmutz J."/>
            <person name="Larimer F."/>
            <person name="Land M."/>
            <person name="Hauser L."/>
            <person name="Kyrpides N."/>
            <person name="Lykidis A."/>
            <person name="Tiedje J."/>
            <person name="Richardson P."/>
        </authorList>
    </citation>
    <scope>NUCLEOTIDE SEQUENCE [LARGE SCALE GENOMIC DNA]</scope>
    <source>
        <strain>W3-18-1</strain>
    </source>
</reference>
<evidence type="ECO:0000255" key="1">
    <source>
        <dbReference type="HAMAP-Rule" id="MF_00719"/>
    </source>
</evidence>